<gene>
    <name type="ORF">SPCC1739.04c</name>
</gene>
<comment type="subcellular location">
    <subcellularLocation>
        <location evidence="3">Membrane</location>
        <topology evidence="3">Single-pass membrane protein</topology>
    </subcellularLocation>
</comment>
<comment type="disruption phenotype">
    <text evidence="2">Leads to meiotic defects.</text>
</comment>
<feature type="chain" id="PRO_0000116889" description="Uncharacterized protein C1739.04c">
    <location>
        <begin position="1"/>
        <end position="274"/>
    </location>
</feature>
<feature type="transmembrane region" description="Helical" evidence="1">
    <location>
        <begin position="238"/>
        <end position="258"/>
    </location>
</feature>
<evidence type="ECO:0000255" key="1"/>
<evidence type="ECO:0000269" key="2">
    <source>
    </source>
</evidence>
<evidence type="ECO:0000305" key="3"/>
<name>YQC4_SCHPO</name>
<keyword id="KW-0472">Membrane</keyword>
<keyword id="KW-1185">Reference proteome</keyword>
<keyword id="KW-0812">Transmembrane</keyword>
<keyword id="KW-1133">Transmembrane helix</keyword>
<proteinExistence type="predicted"/>
<dbReference type="EMBL" id="CU329672">
    <property type="protein sequence ID" value="CAA20778.2"/>
    <property type="molecule type" value="Genomic_DNA"/>
</dbReference>
<dbReference type="PIR" id="T41112">
    <property type="entry name" value="T41112"/>
</dbReference>
<dbReference type="SMR" id="O74466"/>
<dbReference type="BioGRID" id="275582">
    <property type="interactions" value="4"/>
</dbReference>
<dbReference type="STRING" id="284812.O74466"/>
<dbReference type="iPTMnet" id="O74466"/>
<dbReference type="PaxDb" id="4896-SPCC1739.04c.1"/>
<dbReference type="EnsemblFungi" id="SPCC1739.04c.1">
    <property type="protein sequence ID" value="SPCC1739.04c.1:pep"/>
    <property type="gene ID" value="SPCC1739.04c"/>
</dbReference>
<dbReference type="KEGG" id="spo:2539009"/>
<dbReference type="PomBase" id="SPCC1739.04c"/>
<dbReference type="VEuPathDB" id="FungiDB:SPCC1739.04c"/>
<dbReference type="HOGENOM" id="CLU_1031170_0_0_1"/>
<dbReference type="InParanoid" id="O74466"/>
<dbReference type="OMA" id="NPWMKKE"/>
<dbReference type="PRO" id="PR:O74466"/>
<dbReference type="Proteomes" id="UP000002485">
    <property type="component" value="Chromosome III"/>
</dbReference>
<dbReference type="GO" id="GO:0005737">
    <property type="term" value="C:cytoplasm"/>
    <property type="evidence" value="ECO:0007005"/>
    <property type="project" value="PomBase"/>
</dbReference>
<dbReference type="GO" id="GO:0035974">
    <property type="term" value="C:meiotic spindle pole body"/>
    <property type="evidence" value="ECO:0000314"/>
    <property type="project" value="PomBase"/>
</dbReference>
<dbReference type="GO" id="GO:0016020">
    <property type="term" value="C:membrane"/>
    <property type="evidence" value="ECO:0007669"/>
    <property type="project" value="UniProtKB-SubCell"/>
</dbReference>
<dbReference type="GO" id="GO:0000212">
    <property type="term" value="P:meiotic spindle organization"/>
    <property type="evidence" value="ECO:0000315"/>
    <property type="project" value="PomBase"/>
</dbReference>
<sequence length="274" mass="30654">MNSVPNELTKSQELFGQISKISHSKISISELITLLDIHYSELFTKNPWMKKEVRKLASEFVENDPNHLLSKQDACHLIEAFVNVSITSPTLLTSVDPVLYQQLEASSTNDISTVFEDESSSLPIILHPKFSSMQVRTVTSPKDAFVSAFEENKFHFAATESFFEMAFSKIDSCLTSVQSTKKDSIKSRLVERYIQNEESVKRPDKSPFDTMTEATLQSSSDKSENFTKTLLSNVLSTILSVQVIFATVIALIAISVFCFLHTSSKTTSSKTRPS</sequence>
<protein>
    <recommendedName>
        <fullName>Uncharacterized protein C1739.04c</fullName>
    </recommendedName>
</protein>
<organism>
    <name type="scientific">Schizosaccharomyces pombe (strain 972 / ATCC 24843)</name>
    <name type="common">Fission yeast</name>
    <dbReference type="NCBI Taxonomy" id="284812"/>
    <lineage>
        <taxon>Eukaryota</taxon>
        <taxon>Fungi</taxon>
        <taxon>Dikarya</taxon>
        <taxon>Ascomycota</taxon>
        <taxon>Taphrinomycotina</taxon>
        <taxon>Schizosaccharomycetes</taxon>
        <taxon>Schizosaccharomycetales</taxon>
        <taxon>Schizosaccharomycetaceae</taxon>
        <taxon>Schizosaccharomyces</taxon>
    </lineage>
</organism>
<reference key="1">
    <citation type="journal article" date="2002" name="Nature">
        <title>The genome sequence of Schizosaccharomyces pombe.</title>
        <authorList>
            <person name="Wood V."/>
            <person name="Gwilliam R."/>
            <person name="Rajandream M.A."/>
            <person name="Lyne M.H."/>
            <person name="Lyne R."/>
            <person name="Stewart A."/>
            <person name="Sgouros J.G."/>
            <person name="Peat N."/>
            <person name="Hayles J."/>
            <person name="Baker S.G."/>
            <person name="Basham D."/>
            <person name="Bowman S."/>
            <person name="Brooks K."/>
            <person name="Brown D."/>
            <person name="Brown S."/>
            <person name="Chillingworth T."/>
            <person name="Churcher C.M."/>
            <person name="Collins M."/>
            <person name="Connor R."/>
            <person name="Cronin A."/>
            <person name="Davis P."/>
            <person name="Feltwell T."/>
            <person name="Fraser A."/>
            <person name="Gentles S."/>
            <person name="Goble A."/>
            <person name="Hamlin N."/>
            <person name="Harris D.E."/>
            <person name="Hidalgo J."/>
            <person name="Hodgson G."/>
            <person name="Holroyd S."/>
            <person name="Hornsby T."/>
            <person name="Howarth S."/>
            <person name="Huckle E.J."/>
            <person name="Hunt S."/>
            <person name="Jagels K."/>
            <person name="James K.D."/>
            <person name="Jones L."/>
            <person name="Jones M."/>
            <person name="Leather S."/>
            <person name="McDonald S."/>
            <person name="McLean J."/>
            <person name="Mooney P."/>
            <person name="Moule S."/>
            <person name="Mungall K.L."/>
            <person name="Murphy L.D."/>
            <person name="Niblett D."/>
            <person name="Odell C."/>
            <person name="Oliver K."/>
            <person name="O'Neil S."/>
            <person name="Pearson D."/>
            <person name="Quail M.A."/>
            <person name="Rabbinowitsch E."/>
            <person name="Rutherford K.M."/>
            <person name="Rutter S."/>
            <person name="Saunders D."/>
            <person name="Seeger K."/>
            <person name="Sharp S."/>
            <person name="Skelton J."/>
            <person name="Simmonds M.N."/>
            <person name="Squares R."/>
            <person name="Squares S."/>
            <person name="Stevens K."/>
            <person name="Taylor K."/>
            <person name="Taylor R.G."/>
            <person name="Tivey A."/>
            <person name="Walsh S.V."/>
            <person name="Warren T."/>
            <person name="Whitehead S."/>
            <person name="Woodward J.R."/>
            <person name="Volckaert G."/>
            <person name="Aert R."/>
            <person name="Robben J."/>
            <person name="Grymonprez B."/>
            <person name="Weltjens I."/>
            <person name="Vanstreels E."/>
            <person name="Rieger M."/>
            <person name="Schaefer M."/>
            <person name="Mueller-Auer S."/>
            <person name="Gabel C."/>
            <person name="Fuchs M."/>
            <person name="Duesterhoeft A."/>
            <person name="Fritzc C."/>
            <person name="Holzer E."/>
            <person name="Moestl D."/>
            <person name="Hilbert H."/>
            <person name="Borzym K."/>
            <person name="Langer I."/>
            <person name="Beck A."/>
            <person name="Lehrach H."/>
            <person name="Reinhardt R."/>
            <person name="Pohl T.M."/>
            <person name="Eger P."/>
            <person name="Zimmermann W."/>
            <person name="Wedler H."/>
            <person name="Wambutt R."/>
            <person name="Purnelle B."/>
            <person name="Goffeau A."/>
            <person name="Cadieu E."/>
            <person name="Dreano S."/>
            <person name="Gloux S."/>
            <person name="Lelaure V."/>
            <person name="Mottier S."/>
            <person name="Galibert F."/>
            <person name="Aves S.J."/>
            <person name="Xiang Z."/>
            <person name="Hunt C."/>
            <person name="Moore K."/>
            <person name="Hurst S.M."/>
            <person name="Lucas M."/>
            <person name="Rochet M."/>
            <person name="Gaillardin C."/>
            <person name="Tallada V.A."/>
            <person name="Garzon A."/>
            <person name="Thode G."/>
            <person name="Daga R.R."/>
            <person name="Cruzado L."/>
            <person name="Jimenez J."/>
            <person name="Sanchez M."/>
            <person name="del Rey F."/>
            <person name="Benito J."/>
            <person name="Dominguez A."/>
            <person name="Revuelta J.L."/>
            <person name="Moreno S."/>
            <person name="Armstrong J."/>
            <person name="Forsburg S.L."/>
            <person name="Cerutti L."/>
            <person name="Lowe T."/>
            <person name="McCombie W.R."/>
            <person name="Paulsen I."/>
            <person name="Potashkin J."/>
            <person name="Shpakovski G.V."/>
            <person name="Ussery D."/>
            <person name="Barrell B.G."/>
            <person name="Nurse P."/>
        </authorList>
    </citation>
    <scope>NUCLEOTIDE SEQUENCE [LARGE SCALE GENOMIC DNA]</scope>
    <source>
        <strain>972 / ATCC 24843</strain>
    </source>
</reference>
<reference key="2">
    <citation type="journal article" date="2011" name="Science">
        <title>Comparative functional genomics of the fission yeasts.</title>
        <authorList>
            <person name="Rhind N."/>
            <person name="Chen Z."/>
            <person name="Yassour M."/>
            <person name="Thompson D.A."/>
            <person name="Haas B.J."/>
            <person name="Habib N."/>
            <person name="Wapinski I."/>
            <person name="Roy S."/>
            <person name="Lin M.F."/>
            <person name="Heiman D.I."/>
            <person name="Young S.K."/>
            <person name="Furuya K."/>
            <person name="Guo Y."/>
            <person name="Pidoux A."/>
            <person name="Chen H.M."/>
            <person name="Robbertse B."/>
            <person name="Goldberg J.M."/>
            <person name="Aoki K."/>
            <person name="Bayne E.H."/>
            <person name="Berlin A.M."/>
            <person name="Desjardins C.A."/>
            <person name="Dobbs E."/>
            <person name="Dukaj L."/>
            <person name="Fan L."/>
            <person name="FitzGerald M.G."/>
            <person name="French C."/>
            <person name="Gujja S."/>
            <person name="Hansen K."/>
            <person name="Keifenheim D."/>
            <person name="Levin J.Z."/>
            <person name="Mosher R.A."/>
            <person name="Mueller C.A."/>
            <person name="Pfiffner J."/>
            <person name="Priest M."/>
            <person name="Russ C."/>
            <person name="Smialowska A."/>
            <person name="Swoboda P."/>
            <person name="Sykes S.M."/>
            <person name="Vaughn M."/>
            <person name="Vengrova S."/>
            <person name="Yoder R."/>
            <person name="Zeng Q."/>
            <person name="Allshire R."/>
            <person name="Baulcombe D."/>
            <person name="Birren B.W."/>
            <person name="Brown W."/>
            <person name="Ekwall K."/>
            <person name="Kellis M."/>
            <person name="Leatherwood J."/>
            <person name="Levin H."/>
            <person name="Margalit H."/>
            <person name="Martienssen R."/>
            <person name="Nieduszynski C.A."/>
            <person name="Spatafora J.W."/>
            <person name="Friedman N."/>
            <person name="Dalgaard J.Z."/>
            <person name="Baumann P."/>
            <person name="Niki H."/>
            <person name="Regev A."/>
            <person name="Nusbaum C."/>
        </authorList>
    </citation>
    <scope>REVISION OF GENE MODEL</scope>
</reference>
<reference key="3">
    <citation type="journal article" date="2005" name="Curr. Biol.">
        <title>Novel genes required for meiotic chromosome segregation are identified by a high-throughput knockout screen in fission yeast.</title>
        <authorList>
            <person name="Gregan J."/>
            <person name="Rabitsch P.K."/>
            <person name="Sakem B."/>
            <person name="Csutak O."/>
            <person name="Latypov V."/>
            <person name="Lehmann E."/>
            <person name="Kohli J."/>
            <person name="Nasmyth K."/>
        </authorList>
    </citation>
    <scope>DISRUPTION PHENOTYPE</scope>
</reference>
<accession>O74466</accession>